<feature type="chain" id="PRO_1000010010" description="DNA mismatch repair protein MutL">
    <location>
        <begin position="1"/>
        <end position="620"/>
    </location>
</feature>
<keyword id="KW-0227">DNA damage</keyword>
<keyword id="KW-0234">DNA repair</keyword>
<keyword id="KW-1185">Reference proteome</keyword>
<proteinExistence type="inferred from homology"/>
<comment type="function">
    <text evidence="1">This protein is involved in the repair of mismatches in DNA. It is required for dam-dependent methyl-directed DNA mismatch repair. May act as a 'molecular matchmaker', a protein that promotes the formation of a stable complex between two or more DNA-binding proteins in an ATP-dependent manner without itself being part of a final effector complex.</text>
</comment>
<comment type="similarity">
    <text evidence="1">Belongs to the DNA mismatch repair MutL/HexB family.</text>
</comment>
<sequence length="620" mass="70412">MKRINILDECTFNKIAAGEVVERPFSVVKELVENSIDAEAKNITVEVKNGGQDLIKVSDDGAGIYADDIQKAFLTHATSKILNIDDIFSLNTMGFRGEALPSIASISKILLKSKPLSETSGKEIYMEGGNFISFNDVGMNTGTTIKVTDLFYNVPARLKFLKSSSRESSLISDIIQRLSLANPDIAFKLINNGKTVLNTYGSGNLEDAIRVIYGKKTLENISYFESHSDIISVYGYIGNAELSRGSRNNQSIFVNKRYIKSGLITAAVENAFKSFLTINKFPFFVIFIDIFPEYIDVNVHPTKTEIKFKEDKIVFSFVFKTVHESIKKSLYKEFNEQIKEDVKEDNKEIIKENPSLFQNVEKVQIPIDLKSASMDIERKSLVNSVLCNENNIVKDNINKNIYIDTKENLSENKLKNILKENTEDMVSKLPDMKIIGQFDNTYILAESVKNLYIIDQHAAHEKILFETYRDKIKKDEVKSQLLLQPIVLELDSEDFSYYVDNKELFYKTGFNIEVFGENTINIREVPFIMGKPDINNLFMDIINNIKAMGSGETIEVKYDSIAMLACKSAVKAHDKLSKEEMEALINDLRFAKDPFNCPHGRPTIIKITSLELEKKFKRIQ</sequence>
<accession>Q895H3</accession>
<organism>
    <name type="scientific">Clostridium tetani (strain Massachusetts / E88)</name>
    <dbReference type="NCBI Taxonomy" id="212717"/>
    <lineage>
        <taxon>Bacteria</taxon>
        <taxon>Bacillati</taxon>
        <taxon>Bacillota</taxon>
        <taxon>Clostridia</taxon>
        <taxon>Eubacteriales</taxon>
        <taxon>Clostridiaceae</taxon>
        <taxon>Clostridium</taxon>
    </lineage>
</organism>
<protein>
    <recommendedName>
        <fullName evidence="1">DNA mismatch repair protein MutL</fullName>
    </recommendedName>
</protein>
<name>MUTL_CLOTE</name>
<reference key="1">
    <citation type="journal article" date="2003" name="Proc. Natl. Acad. Sci. U.S.A.">
        <title>The genome sequence of Clostridium tetani, the causative agent of tetanus disease.</title>
        <authorList>
            <person name="Brueggemann H."/>
            <person name="Baeumer S."/>
            <person name="Fricke W.F."/>
            <person name="Wiezer A."/>
            <person name="Liesegang H."/>
            <person name="Decker I."/>
            <person name="Herzberg C."/>
            <person name="Martinez-Arias R."/>
            <person name="Merkl R."/>
            <person name="Henne A."/>
            <person name="Gottschalk G."/>
        </authorList>
    </citation>
    <scope>NUCLEOTIDE SEQUENCE [LARGE SCALE GENOMIC DNA]</scope>
    <source>
        <strain>Massachusetts / E88</strain>
    </source>
</reference>
<gene>
    <name evidence="1" type="primary">mutL</name>
    <name type="ordered locus">CTC_01301</name>
</gene>
<evidence type="ECO:0000255" key="1">
    <source>
        <dbReference type="HAMAP-Rule" id="MF_00149"/>
    </source>
</evidence>
<dbReference type="EMBL" id="AE015927">
    <property type="protein sequence ID" value="AAO35867.1"/>
    <property type="molecule type" value="Genomic_DNA"/>
</dbReference>
<dbReference type="RefSeq" id="WP_011099529.1">
    <property type="nucleotide sequence ID" value="NC_004557.1"/>
</dbReference>
<dbReference type="SMR" id="Q895H3"/>
<dbReference type="STRING" id="212717.CTC_01301"/>
<dbReference type="GeneID" id="24255167"/>
<dbReference type="KEGG" id="ctc:CTC_01301"/>
<dbReference type="HOGENOM" id="CLU_004131_4_1_9"/>
<dbReference type="OrthoDB" id="9763467at2"/>
<dbReference type="Proteomes" id="UP000001412">
    <property type="component" value="Chromosome"/>
</dbReference>
<dbReference type="GO" id="GO:0032300">
    <property type="term" value="C:mismatch repair complex"/>
    <property type="evidence" value="ECO:0007669"/>
    <property type="project" value="InterPro"/>
</dbReference>
<dbReference type="GO" id="GO:0005524">
    <property type="term" value="F:ATP binding"/>
    <property type="evidence" value="ECO:0007669"/>
    <property type="project" value="InterPro"/>
</dbReference>
<dbReference type="GO" id="GO:0016887">
    <property type="term" value="F:ATP hydrolysis activity"/>
    <property type="evidence" value="ECO:0007669"/>
    <property type="project" value="InterPro"/>
</dbReference>
<dbReference type="GO" id="GO:0140664">
    <property type="term" value="F:ATP-dependent DNA damage sensor activity"/>
    <property type="evidence" value="ECO:0007669"/>
    <property type="project" value="InterPro"/>
</dbReference>
<dbReference type="GO" id="GO:0030983">
    <property type="term" value="F:mismatched DNA binding"/>
    <property type="evidence" value="ECO:0007669"/>
    <property type="project" value="InterPro"/>
</dbReference>
<dbReference type="GO" id="GO:0006298">
    <property type="term" value="P:mismatch repair"/>
    <property type="evidence" value="ECO:0007669"/>
    <property type="project" value="UniProtKB-UniRule"/>
</dbReference>
<dbReference type="CDD" id="cd16926">
    <property type="entry name" value="HATPase_MutL-MLH-PMS-like"/>
    <property type="match status" value="1"/>
</dbReference>
<dbReference type="CDD" id="cd00782">
    <property type="entry name" value="MutL_Trans"/>
    <property type="match status" value="1"/>
</dbReference>
<dbReference type="FunFam" id="3.30.565.10:FF:000003">
    <property type="entry name" value="DNA mismatch repair endonuclease MutL"/>
    <property type="match status" value="1"/>
</dbReference>
<dbReference type="Gene3D" id="3.30.230.10">
    <property type="match status" value="1"/>
</dbReference>
<dbReference type="Gene3D" id="3.30.565.10">
    <property type="entry name" value="Histidine kinase-like ATPase, C-terminal domain"/>
    <property type="match status" value="1"/>
</dbReference>
<dbReference type="Gene3D" id="3.30.1540.20">
    <property type="entry name" value="MutL, C-terminal domain, dimerisation subdomain"/>
    <property type="match status" value="1"/>
</dbReference>
<dbReference type="Gene3D" id="3.30.1370.100">
    <property type="entry name" value="MutL, C-terminal domain, regulatory subdomain"/>
    <property type="match status" value="1"/>
</dbReference>
<dbReference type="HAMAP" id="MF_00149">
    <property type="entry name" value="DNA_mis_repair"/>
    <property type="match status" value="1"/>
</dbReference>
<dbReference type="InterPro" id="IPR014762">
    <property type="entry name" value="DNA_mismatch_repair_CS"/>
</dbReference>
<dbReference type="InterPro" id="IPR020667">
    <property type="entry name" value="DNA_mismatch_repair_MutL"/>
</dbReference>
<dbReference type="InterPro" id="IPR013507">
    <property type="entry name" value="DNA_mismatch_S5_2-like"/>
</dbReference>
<dbReference type="InterPro" id="IPR036890">
    <property type="entry name" value="HATPase_C_sf"/>
</dbReference>
<dbReference type="InterPro" id="IPR002099">
    <property type="entry name" value="MutL/Mlh/PMS"/>
</dbReference>
<dbReference type="InterPro" id="IPR038973">
    <property type="entry name" value="MutL/Mlh/Pms-like"/>
</dbReference>
<dbReference type="InterPro" id="IPR014790">
    <property type="entry name" value="MutL_C"/>
</dbReference>
<dbReference type="InterPro" id="IPR042120">
    <property type="entry name" value="MutL_C_dimsub"/>
</dbReference>
<dbReference type="InterPro" id="IPR042121">
    <property type="entry name" value="MutL_C_regsub"/>
</dbReference>
<dbReference type="InterPro" id="IPR037198">
    <property type="entry name" value="MutL_C_sf"/>
</dbReference>
<dbReference type="InterPro" id="IPR020568">
    <property type="entry name" value="Ribosomal_Su5_D2-typ_SF"/>
</dbReference>
<dbReference type="InterPro" id="IPR014721">
    <property type="entry name" value="Ribsml_uS5_D2-typ_fold_subgr"/>
</dbReference>
<dbReference type="NCBIfam" id="TIGR00585">
    <property type="entry name" value="mutl"/>
    <property type="match status" value="1"/>
</dbReference>
<dbReference type="PANTHER" id="PTHR10073">
    <property type="entry name" value="DNA MISMATCH REPAIR PROTEIN MLH, PMS, MUTL"/>
    <property type="match status" value="1"/>
</dbReference>
<dbReference type="PANTHER" id="PTHR10073:SF12">
    <property type="entry name" value="DNA MISMATCH REPAIR PROTEIN MLH1"/>
    <property type="match status" value="1"/>
</dbReference>
<dbReference type="Pfam" id="PF01119">
    <property type="entry name" value="DNA_mis_repair"/>
    <property type="match status" value="1"/>
</dbReference>
<dbReference type="Pfam" id="PF13589">
    <property type="entry name" value="HATPase_c_3"/>
    <property type="match status" value="1"/>
</dbReference>
<dbReference type="Pfam" id="PF08676">
    <property type="entry name" value="MutL_C"/>
    <property type="match status" value="1"/>
</dbReference>
<dbReference type="SMART" id="SM01340">
    <property type="entry name" value="DNA_mis_repair"/>
    <property type="match status" value="1"/>
</dbReference>
<dbReference type="SMART" id="SM00853">
    <property type="entry name" value="MutL_C"/>
    <property type="match status" value="1"/>
</dbReference>
<dbReference type="SUPFAM" id="SSF55874">
    <property type="entry name" value="ATPase domain of HSP90 chaperone/DNA topoisomerase II/histidine kinase"/>
    <property type="match status" value="1"/>
</dbReference>
<dbReference type="SUPFAM" id="SSF118116">
    <property type="entry name" value="DNA mismatch repair protein MutL"/>
    <property type="match status" value="1"/>
</dbReference>
<dbReference type="SUPFAM" id="SSF54211">
    <property type="entry name" value="Ribosomal protein S5 domain 2-like"/>
    <property type="match status" value="1"/>
</dbReference>
<dbReference type="PROSITE" id="PS00058">
    <property type="entry name" value="DNA_MISMATCH_REPAIR_1"/>
    <property type="match status" value="1"/>
</dbReference>